<protein>
    <recommendedName>
        <fullName>Gamma-secretase subunit APH1-like</fullName>
    </recommendedName>
</protein>
<comment type="function">
    <text evidence="1">Probable subunit of the gamma-secretase complex, an endoprotease complex that catalyzes the intramembrane cleavage of integral proteins such as Notch receptors.</text>
</comment>
<comment type="subunit">
    <text evidence="1">Probable component of the gamma-secretase complex, a complex composed of a presenilin homodimer, nicastrin, APH1 and PEN2.</text>
</comment>
<comment type="subcellular location">
    <subcellularLocation>
        <location evidence="3">Membrane</location>
        <topology evidence="3">Multi-pass membrane protein</topology>
    </subcellularLocation>
</comment>
<comment type="similarity">
    <text evidence="3">Belongs to the APH-1 family.</text>
</comment>
<proteinExistence type="evidence at transcript level"/>
<accession>Q8L9G7</accession>
<accession>Q8VZI0</accession>
<accession>Q9SIC5</accession>
<gene>
    <name type="ordered locus">At2g31440</name>
    <name type="ORF">T28P16.7</name>
</gene>
<feature type="chain" id="PRO_0000221059" description="Gamma-secretase subunit APH1-like">
    <location>
        <begin position="1"/>
        <end position="250"/>
    </location>
</feature>
<feature type="transmembrane region" description="Helical; Name=1" evidence="2">
    <location>
        <begin position="5"/>
        <end position="25"/>
    </location>
</feature>
<feature type="transmembrane region" description="Helical; Name=2" evidence="2">
    <location>
        <begin position="29"/>
        <end position="49"/>
    </location>
</feature>
<feature type="transmembrane region" description="Helical; Name=3" evidence="2">
    <location>
        <begin position="57"/>
        <end position="77"/>
    </location>
</feature>
<feature type="transmembrane region" description="Helical; Name=4" evidence="2">
    <location>
        <begin position="116"/>
        <end position="136"/>
    </location>
</feature>
<feature type="transmembrane region" description="Helical; Name=5" evidence="2">
    <location>
        <begin position="157"/>
        <end position="177"/>
    </location>
</feature>
<feature type="transmembrane region" description="Helical; Name=6" evidence="2">
    <location>
        <begin position="191"/>
        <end position="211"/>
    </location>
</feature>
<feature type="transmembrane region" description="Helical; Name=7" evidence="2">
    <location>
        <begin position="212"/>
        <end position="232"/>
    </location>
</feature>
<feature type="sequence conflict" description="In Ref. 4; AAM65980." evidence="3" ref="4">
    <original>L</original>
    <variation>V</variation>
    <location>
        <position position="69"/>
    </location>
</feature>
<evidence type="ECO:0000250" key="1"/>
<evidence type="ECO:0000255" key="2"/>
<evidence type="ECO:0000305" key="3"/>
<keyword id="KW-0472">Membrane</keyword>
<keyword id="KW-0914">Notch signaling pathway</keyword>
<keyword id="KW-1185">Reference proteome</keyword>
<keyword id="KW-0812">Transmembrane</keyword>
<keyword id="KW-1133">Transmembrane helix</keyword>
<dbReference type="EMBL" id="AC007169">
    <property type="protein sequence ID" value="AAD26475.2"/>
    <property type="molecule type" value="Genomic_DNA"/>
</dbReference>
<dbReference type="EMBL" id="CP002685">
    <property type="protein sequence ID" value="AEC08548.1"/>
    <property type="molecule type" value="Genomic_DNA"/>
</dbReference>
<dbReference type="EMBL" id="CP002685">
    <property type="protein sequence ID" value="ANM62984.1"/>
    <property type="molecule type" value="Genomic_DNA"/>
</dbReference>
<dbReference type="EMBL" id="AY064157">
    <property type="protein sequence ID" value="AAL36063.1"/>
    <property type="molecule type" value="mRNA"/>
</dbReference>
<dbReference type="EMBL" id="AY097412">
    <property type="protein sequence ID" value="AAM19928.1"/>
    <property type="molecule type" value="mRNA"/>
</dbReference>
<dbReference type="EMBL" id="AY088444">
    <property type="protein sequence ID" value="AAM65980.1"/>
    <property type="molecule type" value="mRNA"/>
</dbReference>
<dbReference type="PIR" id="G84720">
    <property type="entry name" value="G84720"/>
</dbReference>
<dbReference type="RefSeq" id="NP_001325103.1">
    <property type="nucleotide sequence ID" value="NM_001336332.1"/>
</dbReference>
<dbReference type="RefSeq" id="NP_565724.1">
    <property type="nucleotide sequence ID" value="NM_128701.3"/>
</dbReference>
<dbReference type="SMR" id="Q8L9G7"/>
<dbReference type="BioGRID" id="3049">
    <property type="interactions" value="4"/>
</dbReference>
<dbReference type="FunCoup" id="Q8L9G7">
    <property type="interactions" value="3272"/>
</dbReference>
<dbReference type="IntAct" id="Q8L9G7">
    <property type="interactions" value="2"/>
</dbReference>
<dbReference type="STRING" id="3702.Q8L9G7"/>
<dbReference type="PaxDb" id="3702-AT2G31440.1"/>
<dbReference type="ProteomicsDB" id="246914"/>
<dbReference type="EnsemblPlants" id="AT2G31440.1">
    <property type="protein sequence ID" value="AT2G31440.1"/>
    <property type="gene ID" value="AT2G31440"/>
</dbReference>
<dbReference type="EnsemblPlants" id="AT2G31440.2">
    <property type="protein sequence ID" value="AT2G31440.2"/>
    <property type="gene ID" value="AT2G31440"/>
</dbReference>
<dbReference type="GeneID" id="817702"/>
<dbReference type="Gramene" id="AT2G31440.1">
    <property type="protein sequence ID" value="AT2G31440.1"/>
    <property type="gene ID" value="AT2G31440"/>
</dbReference>
<dbReference type="Gramene" id="AT2G31440.2">
    <property type="protein sequence ID" value="AT2G31440.2"/>
    <property type="gene ID" value="AT2G31440"/>
</dbReference>
<dbReference type="KEGG" id="ath:AT2G31440"/>
<dbReference type="Araport" id="AT2G31440"/>
<dbReference type="TAIR" id="AT2G31440">
    <property type="gene designation" value="APH-1"/>
</dbReference>
<dbReference type="eggNOG" id="KOG3972">
    <property type="taxonomic scope" value="Eukaryota"/>
</dbReference>
<dbReference type="HOGENOM" id="CLU_1117281_0_0_1"/>
<dbReference type="InParanoid" id="Q8L9G7"/>
<dbReference type="OMA" id="DTNNYLH"/>
<dbReference type="OrthoDB" id="6507463at2759"/>
<dbReference type="PhylomeDB" id="Q8L9G7"/>
<dbReference type="PRO" id="PR:Q8L9G7"/>
<dbReference type="Proteomes" id="UP000006548">
    <property type="component" value="Chromosome 2"/>
</dbReference>
<dbReference type="ExpressionAtlas" id="Q8L9G7">
    <property type="expression patterns" value="baseline and differential"/>
</dbReference>
<dbReference type="GO" id="GO:0016020">
    <property type="term" value="C:membrane"/>
    <property type="evidence" value="ECO:0007669"/>
    <property type="project" value="UniProtKB-SubCell"/>
</dbReference>
<dbReference type="GO" id="GO:0007219">
    <property type="term" value="P:Notch signaling pathway"/>
    <property type="evidence" value="ECO:0007669"/>
    <property type="project" value="UniProtKB-KW"/>
</dbReference>
<dbReference type="GO" id="GO:0016485">
    <property type="term" value="P:protein processing"/>
    <property type="evidence" value="ECO:0007669"/>
    <property type="project" value="InterPro"/>
</dbReference>
<dbReference type="InterPro" id="IPR009294">
    <property type="entry name" value="Aph-1"/>
</dbReference>
<dbReference type="PANTHER" id="PTHR12889">
    <property type="entry name" value="GAMMA-SECRETASE SUBUNIT APH-1"/>
    <property type="match status" value="1"/>
</dbReference>
<dbReference type="Pfam" id="PF06105">
    <property type="entry name" value="Aph-1"/>
    <property type="match status" value="1"/>
</dbReference>
<organism>
    <name type="scientific">Arabidopsis thaliana</name>
    <name type="common">Mouse-ear cress</name>
    <dbReference type="NCBI Taxonomy" id="3702"/>
    <lineage>
        <taxon>Eukaryota</taxon>
        <taxon>Viridiplantae</taxon>
        <taxon>Streptophyta</taxon>
        <taxon>Embryophyta</taxon>
        <taxon>Tracheophyta</taxon>
        <taxon>Spermatophyta</taxon>
        <taxon>Magnoliopsida</taxon>
        <taxon>eudicotyledons</taxon>
        <taxon>Gunneridae</taxon>
        <taxon>Pentapetalae</taxon>
        <taxon>rosids</taxon>
        <taxon>malvids</taxon>
        <taxon>Brassicales</taxon>
        <taxon>Brassicaceae</taxon>
        <taxon>Camelineae</taxon>
        <taxon>Arabidopsis</taxon>
    </lineage>
</organism>
<reference key="1">
    <citation type="journal article" date="1999" name="Nature">
        <title>Sequence and analysis of chromosome 2 of the plant Arabidopsis thaliana.</title>
        <authorList>
            <person name="Lin X."/>
            <person name="Kaul S."/>
            <person name="Rounsley S.D."/>
            <person name="Shea T.P."/>
            <person name="Benito M.-I."/>
            <person name="Town C.D."/>
            <person name="Fujii C.Y."/>
            <person name="Mason T.M."/>
            <person name="Bowman C.L."/>
            <person name="Barnstead M.E."/>
            <person name="Feldblyum T.V."/>
            <person name="Buell C.R."/>
            <person name="Ketchum K.A."/>
            <person name="Lee J.J."/>
            <person name="Ronning C.M."/>
            <person name="Koo H.L."/>
            <person name="Moffat K.S."/>
            <person name="Cronin L.A."/>
            <person name="Shen M."/>
            <person name="Pai G."/>
            <person name="Van Aken S."/>
            <person name="Umayam L."/>
            <person name="Tallon L.J."/>
            <person name="Gill J.E."/>
            <person name="Adams M.D."/>
            <person name="Carrera A.J."/>
            <person name="Creasy T.H."/>
            <person name="Goodman H.M."/>
            <person name="Somerville C.R."/>
            <person name="Copenhaver G.P."/>
            <person name="Preuss D."/>
            <person name="Nierman W.C."/>
            <person name="White O."/>
            <person name="Eisen J.A."/>
            <person name="Salzberg S.L."/>
            <person name="Fraser C.M."/>
            <person name="Venter J.C."/>
        </authorList>
    </citation>
    <scope>NUCLEOTIDE SEQUENCE [LARGE SCALE GENOMIC DNA]</scope>
    <source>
        <strain>cv. Columbia</strain>
    </source>
</reference>
<reference key="2">
    <citation type="journal article" date="2017" name="Plant J.">
        <title>Araport11: a complete reannotation of the Arabidopsis thaliana reference genome.</title>
        <authorList>
            <person name="Cheng C.Y."/>
            <person name="Krishnakumar V."/>
            <person name="Chan A.P."/>
            <person name="Thibaud-Nissen F."/>
            <person name="Schobel S."/>
            <person name="Town C.D."/>
        </authorList>
    </citation>
    <scope>GENOME REANNOTATION</scope>
    <source>
        <strain>cv. Columbia</strain>
    </source>
</reference>
<reference key="3">
    <citation type="journal article" date="2003" name="Science">
        <title>Empirical analysis of transcriptional activity in the Arabidopsis genome.</title>
        <authorList>
            <person name="Yamada K."/>
            <person name="Lim J."/>
            <person name="Dale J.M."/>
            <person name="Chen H."/>
            <person name="Shinn P."/>
            <person name="Palm C.J."/>
            <person name="Southwick A.M."/>
            <person name="Wu H.C."/>
            <person name="Kim C.J."/>
            <person name="Nguyen M."/>
            <person name="Pham P.K."/>
            <person name="Cheuk R.F."/>
            <person name="Karlin-Newmann G."/>
            <person name="Liu S.X."/>
            <person name="Lam B."/>
            <person name="Sakano H."/>
            <person name="Wu T."/>
            <person name="Yu G."/>
            <person name="Miranda M."/>
            <person name="Quach H.L."/>
            <person name="Tripp M."/>
            <person name="Chang C.H."/>
            <person name="Lee J.M."/>
            <person name="Toriumi M.J."/>
            <person name="Chan M.M."/>
            <person name="Tang C.C."/>
            <person name="Onodera C.S."/>
            <person name="Deng J.M."/>
            <person name="Akiyama K."/>
            <person name="Ansari Y."/>
            <person name="Arakawa T."/>
            <person name="Banh J."/>
            <person name="Banno F."/>
            <person name="Bowser L."/>
            <person name="Brooks S.Y."/>
            <person name="Carninci P."/>
            <person name="Chao Q."/>
            <person name="Choy N."/>
            <person name="Enju A."/>
            <person name="Goldsmith A.D."/>
            <person name="Gurjal M."/>
            <person name="Hansen N.F."/>
            <person name="Hayashizaki Y."/>
            <person name="Johnson-Hopson C."/>
            <person name="Hsuan V.W."/>
            <person name="Iida K."/>
            <person name="Karnes M."/>
            <person name="Khan S."/>
            <person name="Koesema E."/>
            <person name="Ishida J."/>
            <person name="Jiang P.X."/>
            <person name="Jones T."/>
            <person name="Kawai J."/>
            <person name="Kamiya A."/>
            <person name="Meyers C."/>
            <person name="Nakajima M."/>
            <person name="Narusaka M."/>
            <person name="Seki M."/>
            <person name="Sakurai T."/>
            <person name="Satou M."/>
            <person name="Tamse R."/>
            <person name="Vaysberg M."/>
            <person name="Wallender E.K."/>
            <person name="Wong C."/>
            <person name="Yamamura Y."/>
            <person name="Yuan S."/>
            <person name="Shinozaki K."/>
            <person name="Davis R.W."/>
            <person name="Theologis A."/>
            <person name="Ecker J.R."/>
        </authorList>
    </citation>
    <scope>NUCLEOTIDE SEQUENCE [LARGE SCALE MRNA]</scope>
    <source>
        <strain>cv. Columbia</strain>
    </source>
</reference>
<reference key="4">
    <citation type="submission" date="2002-03" db="EMBL/GenBank/DDBJ databases">
        <title>Full-length cDNA from Arabidopsis thaliana.</title>
        <authorList>
            <person name="Brover V.V."/>
            <person name="Troukhan M.E."/>
            <person name="Alexandrov N.A."/>
            <person name="Lu Y.-P."/>
            <person name="Flavell R.B."/>
            <person name="Feldmann K.A."/>
        </authorList>
    </citation>
    <scope>NUCLEOTIDE SEQUENCE [LARGE SCALE MRNA]</scope>
</reference>
<sequence>MTVAAGIGYALVALGPSLSLFVSVISRKPFLILTVLSSTLLWLVSLIILSGLWRPFLPLKANVWWPYALLVITSVCFQEGLRFLFWKVYKRLEDVLDSFADRISRPRLFLTDKLQIALAGGLGHGVAHAVFFCLSLLTPAFGPATFYVERCSKVPFFLISAIIALAFVTIHTFSMVIAFEGYAKGNKVDQIIVPVIHLTAGMLTLVNFASEGCVIGVPLLYLVASLTLVHCGKMVWQRLLESRNQSSASR</sequence>
<name>APH1_ARATH</name>